<comment type="similarity">
    <text evidence="1">Belongs to the universal ribosomal protein uS9 family.</text>
</comment>
<keyword id="KW-0687">Ribonucleoprotein</keyword>
<keyword id="KW-0689">Ribosomal protein</keyword>
<feature type="chain" id="PRO_1000051327" description="Small ribosomal subunit protein uS9">
    <location>
        <begin position="1"/>
        <end position="130"/>
    </location>
</feature>
<evidence type="ECO:0000255" key="1">
    <source>
        <dbReference type="HAMAP-Rule" id="MF_00532"/>
    </source>
</evidence>
<evidence type="ECO:0000305" key="2"/>
<accession>A1RNJ7</accession>
<sequence length="130" mass="14536">MAATQYYGTGRRKTSTARVFAKAGSGNIVVNQRPLDQYFGRETARMVVRQPLELVEMTDKLDIYVTVKGGGITGQAGAIRHGITRALMQLDEALRPSLRSAGFVTRDARKVERKKVGLRKARRKPQFSKR</sequence>
<gene>
    <name evidence="1" type="primary">rpsI</name>
    <name type="ordered locus">Sputw3181_3430</name>
</gene>
<protein>
    <recommendedName>
        <fullName evidence="1">Small ribosomal subunit protein uS9</fullName>
    </recommendedName>
    <alternativeName>
        <fullName evidence="2">30S ribosomal protein S9</fullName>
    </alternativeName>
</protein>
<dbReference type="EMBL" id="CP000503">
    <property type="protein sequence ID" value="ABM26242.1"/>
    <property type="molecule type" value="Genomic_DNA"/>
</dbReference>
<dbReference type="RefSeq" id="WP_006083052.1">
    <property type="nucleotide sequence ID" value="NC_008750.1"/>
</dbReference>
<dbReference type="SMR" id="A1RNJ7"/>
<dbReference type="GeneID" id="94726683"/>
<dbReference type="KEGG" id="shw:Sputw3181_3430"/>
<dbReference type="HOGENOM" id="CLU_046483_2_1_6"/>
<dbReference type="Proteomes" id="UP000002597">
    <property type="component" value="Chromosome"/>
</dbReference>
<dbReference type="GO" id="GO:0022627">
    <property type="term" value="C:cytosolic small ribosomal subunit"/>
    <property type="evidence" value="ECO:0007669"/>
    <property type="project" value="TreeGrafter"/>
</dbReference>
<dbReference type="GO" id="GO:0003723">
    <property type="term" value="F:RNA binding"/>
    <property type="evidence" value="ECO:0007669"/>
    <property type="project" value="TreeGrafter"/>
</dbReference>
<dbReference type="GO" id="GO:0003735">
    <property type="term" value="F:structural constituent of ribosome"/>
    <property type="evidence" value="ECO:0007669"/>
    <property type="project" value="InterPro"/>
</dbReference>
<dbReference type="GO" id="GO:0006412">
    <property type="term" value="P:translation"/>
    <property type="evidence" value="ECO:0007669"/>
    <property type="project" value="UniProtKB-UniRule"/>
</dbReference>
<dbReference type="FunFam" id="3.30.230.10:FF:000001">
    <property type="entry name" value="30S ribosomal protein S9"/>
    <property type="match status" value="1"/>
</dbReference>
<dbReference type="Gene3D" id="3.30.230.10">
    <property type="match status" value="1"/>
</dbReference>
<dbReference type="HAMAP" id="MF_00532_B">
    <property type="entry name" value="Ribosomal_uS9_B"/>
    <property type="match status" value="1"/>
</dbReference>
<dbReference type="InterPro" id="IPR020568">
    <property type="entry name" value="Ribosomal_Su5_D2-typ_SF"/>
</dbReference>
<dbReference type="InterPro" id="IPR000754">
    <property type="entry name" value="Ribosomal_uS9"/>
</dbReference>
<dbReference type="InterPro" id="IPR023035">
    <property type="entry name" value="Ribosomal_uS9_bac/plastid"/>
</dbReference>
<dbReference type="InterPro" id="IPR020574">
    <property type="entry name" value="Ribosomal_uS9_CS"/>
</dbReference>
<dbReference type="InterPro" id="IPR014721">
    <property type="entry name" value="Ribsml_uS5_D2-typ_fold_subgr"/>
</dbReference>
<dbReference type="NCBIfam" id="NF001099">
    <property type="entry name" value="PRK00132.1"/>
    <property type="match status" value="1"/>
</dbReference>
<dbReference type="PANTHER" id="PTHR21569">
    <property type="entry name" value="RIBOSOMAL PROTEIN S9"/>
    <property type="match status" value="1"/>
</dbReference>
<dbReference type="PANTHER" id="PTHR21569:SF1">
    <property type="entry name" value="SMALL RIBOSOMAL SUBUNIT PROTEIN US9M"/>
    <property type="match status" value="1"/>
</dbReference>
<dbReference type="Pfam" id="PF00380">
    <property type="entry name" value="Ribosomal_S9"/>
    <property type="match status" value="1"/>
</dbReference>
<dbReference type="SUPFAM" id="SSF54211">
    <property type="entry name" value="Ribosomal protein S5 domain 2-like"/>
    <property type="match status" value="1"/>
</dbReference>
<dbReference type="PROSITE" id="PS00360">
    <property type="entry name" value="RIBOSOMAL_S9"/>
    <property type="match status" value="1"/>
</dbReference>
<organism>
    <name type="scientific">Shewanella sp. (strain W3-18-1)</name>
    <dbReference type="NCBI Taxonomy" id="351745"/>
    <lineage>
        <taxon>Bacteria</taxon>
        <taxon>Pseudomonadati</taxon>
        <taxon>Pseudomonadota</taxon>
        <taxon>Gammaproteobacteria</taxon>
        <taxon>Alteromonadales</taxon>
        <taxon>Shewanellaceae</taxon>
        <taxon>Shewanella</taxon>
    </lineage>
</organism>
<reference key="1">
    <citation type="submission" date="2006-12" db="EMBL/GenBank/DDBJ databases">
        <title>Complete sequence of Shewanella sp. W3-18-1.</title>
        <authorList>
            <consortium name="US DOE Joint Genome Institute"/>
            <person name="Copeland A."/>
            <person name="Lucas S."/>
            <person name="Lapidus A."/>
            <person name="Barry K."/>
            <person name="Detter J.C."/>
            <person name="Glavina del Rio T."/>
            <person name="Hammon N."/>
            <person name="Israni S."/>
            <person name="Dalin E."/>
            <person name="Tice H."/>
            <person name="Pitluck S."/>
            <person name="Chain P."/>
            <person name="Malfatti S."/>
            <person name="Shin M."/>
            <person name="Vergez L."/>
            <person name="Schmutz J."/>
            <person name="Larimer F."/>
            <person name="Land M."/>
            <person name="Hauser L."/>
            <person name="Kyrpides N."/>
            <person name="Lykidis A."/>
            <person name="Tiedje J."/>
            <person name="Richardson P."/>
        </authorList>
    </citation>
    <scope>NUCLEOTIDE SEQUENCE [LARGE SCALE GENOMIC DNA]</scope>
    <source>
        <strain>W3-18-1</strain>
    </source>
</reference>
<name>RS9_SHESW</name>
<proteinExistence type="inferred from homology"/>